<feature type="chain" id="PRO_0000405026" description="Uncharacterized protein MPNE_0244">
    <location>
        <begin position="1"/>
        <end position="135"/>
    </location>
</feature>
<protein>
    <recommendedName>
        <fullName>Uncharacterized protein MPNE_0244</fullName>
    </recommendedName>
</protein>
<name>Y244_MYCPB</name>
<proteinExistence type="predicted"/>
<reference key="1">
    <citation type="journal article" date="1997" name="Microbiology">
        <title>The immunoreactive 116 kDa surface protein of Mycoplasma pneumoniae is encoded in an operon.</title>
        <authorList>
            <person name="Duffy M.F."/>
            <person name="Walker I.D."/>
            <person name="Browning G.F."/>
        </authorList>
    </citation>
    <scope>NUCLEOTIDE SEQUENCE [GENOMIC DNA]</scope>
    <source>
        <strain>ATCC 15531 / DSM 23978 / CIP 103766 / NBRC 14401 / NCTC 10119 / FH</strain>
    </source>
</reference>
<reference key="2">
    <citation type="journal article" date="2010" name="Appl. Environ. Microbiol.">
        <title>Targeted chromosomal knockouts in Mycoplasma pneumoniae.</title>
        <authorList>
            <person name="Krishnakumar R."/>
            <person name="Assad-Garcia N."/>
            <person name="Benders G.A."/>
            <person name="Phan Q."/>
            <person name="Montague M.G."/>
            <person name="Glass J.I."/>
        </authorList>
    </citation>
    <scope>NUCLEOTIDE SEQUENCE [LARGE SCALE GENOMIC DNA]</scope>
    <source>
        <strain>ATCC 15531 / DSM 23978 / CIP 103766 / NBRC 14401 / NCTC 10119 / FH</strain>
    </source>
</reference>
<accession>E1QBX4</accession>
<accession>P75557</accession>
<dbReference type="EMBL" id="Z71425">
    <property type="protein sequence ID" value="CAA96034.1"/>
    <property type="molecule type" value="Genomic_DNA"/>
</dbReference>
<dbReference type="EMBL" id="CP002077">
    <property type="protein sequence ID" value="ADK86718.1"/>
    <property type="molecule type" value="Genomic_DNA"/>
</dbReference>
<dbReference type="RefSeq" id="WP_010874569.1">
    <property type="nucleotide sequence ID" value="NZ_CP010546.1"/>
</dbReference>
<dbReference type="STRING" id="722438.F539_01190"/>
<dbReference type="PaxDb" id="722438-MPNE_0244"/>
<dbReference type="KEGG" id="mpj:MPNE_0244"/>
<dbReference type="PATRIC" id="fig|722438.3.peg.237"/>
<dbReference type="eggNOG" id="ENOG5030NKT">
    <property type="taxonomic scope" value="Bacteria"/>
</dbReference>
<dbReference type="HOGENOM" id="CLU_1862952_0_0_14"/>
<dbReference type="Proteomes" id="UP000007756">
    <property type="component" value="Chromosome"/>
</dbReference>
<dbReference type="InterPro" id="IPR035339">
    <property type="entry name" value="DUF5426"/>
</dbReference>
<dbReference type="Pfam" id="PF17473">
    <property type="entry name" value="DUF5426"/>
    <property type="match status" value="1"/>
</dbReference>
<organism>
    <name type="scientific">Mycoplasmoides pneumoniae (strain ATCC 15531 / DSM 23978 / CIP 103766 / NBRC 14401 / NCTC 10119 / FH)</name>
    <name type="common">Mycoplasma pneumoniae</name>
    <dbReference type="NCBI Taxonomy" id="722438"/>
    <lineage>
        <taxon>Bacteria</taxon>
        <taxon>Bacillati</taxon>
        <taxon>Mycoplasmatota</taxon>
        <taxon>Mycoplasmoidales</taxon>
        <taxon>Mycoplasmoidaceae</taxon>
        <taxon>Mycoplasmoides</taxon>
    </lineage>
</organism>
<sequence>MRKLIKLNVIVFVLLYLGELFASLSFKLISCLKTRNQYSLNGYYALFVFVNIIQKMANSFQKLASSVVLFETEINEFLVLFTDTKNKREESEPVRQVSTTQEYHQVTLDQQHYFNHKLSDYFRLFKDKTFFFEII</sequence>
<gene>
    <name type="ordered locus">MPNE_0244</name>
</gene>